<name>JHBP_PLAVG</name>
<accession>P56675</accession>
<dbReference type="GO" id="GO:0005576">
    <property type="term" value="C:extracellular region"/>
    <property type="evidence" value="ECO:0007669"/>
    <property type="project" value="UniProtKB-SubCell"/>
</dbReference>
<protein>
    <recommendedName>
        <fullName>Juvenile hormone-binding protein</fullName>
    </recommendedName>
</protein>
<feature type="chain" id="PRO_0000084281" description="Juvenile hormone-binding protein">
    <location>
        <begin position="1"/>
        <end position="17" status="greater than"/>
    </location>
</feature>
<feature type="non-terminal residue">
    <location>
        <position position="17"/>
    </location>
</feature>
<proteinExistence type="evidence at protein level"/>
<keyword id="KW-0903">Direct protein sequencing</keyword>
<keyword id="KW-0964">Secreted</keyword>
<organism>
    <name type="scientific">Platyprepia virginalis</name>
    <name type="common">Ranchman's tiger moth</name>
    <name type="synonym">Arctia virginalis</name>
    <dbReference type="NCBI Taxonomy" id="30227"/>
    <lineage>
        <taxon>Eukaryota</taxon>
        <taxon>Metazoa</taxon>
        <taxon>Ecdysozoa</taxon>
        <taxon>Arthropoda</taxon>
        <taxon>Hexapoda</taxon>
        <taxon>Insecta</taxon>
        <taxon>Pterygota</taxon>
        <taxon>Neoptera</taxon>
        <taxon>Endopterygota</taxon>
        <taxon>Lepidoptera</taxon>
        <taxon>Glossata</taxon>
        <taxon>Ditrysia</taxon>
        <taxon>Noctuoidea</taxon>
        <taxon>Erebidae</taxon>
        <taxon>Arctiinae</taxon>
        <taxon>Arctia</taxon>
    </lineage>
</organism>
<gene>
    <name type="primary">JHBP</name>
</gene>
<reference key="1">
    <citation type="journal article" date="1990" name="Insect Biochem.">
        <title>Rapid purification and N-terminal amino acid sequence of a photoaffinity-labeled juvenile hormone binding protein from an arctiid moth larva, Platyprepia virginalis.</title>
        <authorList>
            <person name="Prestwich G.D."/>
            <person name="Atkinson J.K."/>
        </authorList>
    </citation>
    <scope>PROTEIN SEQUENCE</scope>
</reference>
<sequence>ETLFDPCSTQDIKKVGV</sequence>
<comment type="function">
    <text>Prevents juvenile hormone from being hydrolyzed by general esterases by combining with it specifically.</text>
</comment>
<comment type="subcellular location">
    <subcellularLocation>
        <location>Secreted</location>
    </subcellularLocation>
</comment>